<name>PANC_HELAH</name>
<keyword id="KW-0067">ATP-binding</keyword>
<keyword id="KW-0963">Cytoplasm</keyword>
<keyword id="KW-0436">Ligase</keyword>
<keyword id="KW-0547">Nucleotide-binding</keyword>
<keyword id="KW-0566">Pantothenate biosynthesis</keyword>
<reference key="1">
    <citation type="journal article" date="2006" name="PLoS Genet.">
        <title>Who ate whom? Adaptive Helicobacter genomic changes that accompanied a host jump from early humans to large felines.</title>
        <authorList>
            <person name="Eppinger M."/>
            <person name="Baar C."/>
            <person name="Linz B."/>
            <person name="Raddatz G."/>
            <person name="Lanz C."/>
            <person name="Keller H."/>
            <person name="Morelli G."/>
            <person name="Gressmann H."/>
            <person name="Achtman M."/>
            <person name="Schuster S.C."/>
        </authorList>
    </citation>
    <scope>NUCLEOTIDE SEQUENCE [LARGE SCALE GENOMIC DNA]</scope>
    <source>
        <strain>Sheeba</strain>
    </source>
</reference>
<proteinExistence type="inferred from homology"/>
<gene>
    <name evidence="1" type="primary">panC</name>
    <name type="ordered locus">Hac_0259</name>
</gene>
<organism>
    <name type="scientific">Helicobacter acinonychis (strain Sheeba)</name>
    <dbReference type="NCBI Taxonomy" id="382638"/>
    <lineage>
        <taxon>Bacteria</taxon>
        <taxon>Pseudomonadati</taxon>
        <taxon>Campylobacterota</taxon>
        <taxon>Epsilonproteobacteria</taxon>
        <taxon>Campylobacterales</taxon>
        <taxon>Helicobacteraceae</taxon>
        <taxon>Helicobacter</taxon>
    </lineage>
</organism>
<dbReference type="EC" id="6.3.2.1" evidence="1"/>
<dbReference type="EMBL" id="AM260522">
    <property type="protein sequence ID" value="CAJ99105.1"/>
    <property type="molecule type" value="Genomic_DNA"/>
</dbReference>
<dbReference type="RefSeq" id="WP_011577220.1">
    <property type="nucleotide sequence ID" value="NC_008229.1"/>
</dbReference>
<dbReference type="SMR" id="Q17Z21"/>
<dbReference type="STRING" id="382638.Hac_0259"/>
<dbReference type="GeneID" id="31757772"/>
<dbReference type="KEGG" id="hac:Hac_0259"/>
<dbReference type="eggNOG" id="COG0414">
    <property type="taxonomic scope" value="Bacteria"/>
</dbReference>
<dbReference type="HOGENOM" id="CLU_047148_0_0_7"/>
<dbReference type="OrthoDB" id="9773087at2"/>
<dbReference type="BioCyc" id="HACI382638:HAC_RS01130-MONOMER"/>
<dbReference type="UniPathway" id="UPA00028">
    <property type="reaction ID" value="UER00005"/>
</dbReference>
<dbReference type="Proteomes" id="UP000000775">
    <property type="component" value="Chromosome"/>
</dbReference>
<dbReference type="GO" id="GO:0005829">
    <property type="term" value="C:cytosol"/>
    <property type="evidence" value="ECO:0007669"/>
    <property type="project" value="TreeGrafter"/>
</dbReference>
<dbReference type="GO" id="GO:0005524">
    <property type="term" value="F:ATP binding"/>
    <property type="evidence" value="ECO:0007669"/>
    <property type="project" value="UniProtKB-KW"/>
</dbReference>
<dbReference type="GO" id="GO:0004592">
    <property type="term" value="F:pantoate-beta-alanine ligase activity"/>
    <property type="evidence" value="ECO:0007669"/>
    <property type="project" value="UniProtKB-UniRule"/>
</dbReference>
<dbReference type="GO" id="GO:0015940">
    <property type="term" value="P:pantothenate biosynthetic process"/>
    <property type="evidence" value="ECO:0007669"/>
    <property type="project" value="UniProtKB-UniRule"/>
</dbReference>
<dbReference type="CDD" id="cd00560">
    <property type="entry name" value="PanC"/>
    <property type="match status" value="1"/>
</dbReference>
<dbReference type="FunFam" id="3.40.50.620:FF:000114">
    <property type="entry name" value="Pantothenate synthetase"/>
    <property type="match status" value="1"/>
</dbReference>
<dbReference type="Gene3D" id="3.40.50.620">
    <property type="entry name" value="HUPs"/>
    <property type="match status" value="1"/>
</dbReference>
<dbReference type="Gene3D" id="3.30.1300.10">
    <property type="entry name" value="Pantoate-beta-alanine ligase, C-terminal domain"/>
    <property type="match status" value="1"/>
</dbReference>
<dbReference type="HAMAP" id="MF_00158">
    <property type="entry name" value="PanC"/>
    <property type="match status" value="1"/>
</dbReference>
<dbReference type="InterPro" id="IPR004821">
    <property type="entry name" value="Cyt_trans-like"/>
</dbReference>
<dbReference type="InterPro" id="IPR003721">
    <property type="entry name" value="Pantoate_ligase"/>
</dbReference>
<dbReference type="InterPro" id="IPR042176">
    <property type="entry name" value="Pantoate_ligase_C"/>
</dbReference>
<dbReference type="InterPro" id="IPR014729">
    <property type="entry name" value="Rossmann-like_a/b/a_fold"/>
</dbReference>
<dbReference type="NCBIfam" id="TIGR00125">
    <property type="entry name" value="cyt_tran_rel"/>
    <property type="match status" value="1"/>
</dbReference>
<dbReference type="NCBIfam" id="TIGR00018">
    <property type="entry name" value="panC"/>
    <property type="match status" value="1"/>
</dbReference>
<dbReference type="PANTHER" id="PTHR21299">
    <property type="entry name" value="CYTIDYLATE KINASE/PANTOATE-BETA-ALANINE LIGASE"/>
    <property type="match status" value="1"/>
</dbReference>
<dbReference type="PANTHER" id="PTHR21299:SF1">
    <property type="entry name" value="PANTOATE--BETA-ALANINE LIGASE"/>
    <property type="match status" value="1"/>
</dbReference>
<dbReference type="Pfam" id="PF02569">
    <property type="entry name" value="Pantoate_ligase"/>
    <property type="match status" value="1"/>
</dbReference>
<dbReference type="SUPFAM" id="SSF52374">
    <property type="entry name" value="Nucleotidylyl transferase"/>
    <property type="match status" value="1"/>
</dbReference>
<sequence length="276" mass="31417">MQVLETISDLREYRKNVKESVGFVPTMGALHKGHQSLIERSLKENFHTITSVFVNPTQFGANEDFSAYPRPLEKDLALCEKLGVDVVFVPKISEMYPYKSEQRLKLYAPKFLSHSLEGAMRKGHFDGVAQVVLRLFHLVNPTRAYFGKKDAQQLLIIQHLVKDLLLDIEIVPCEIVRDSDHLALSSRNVYLNAVERKQALAIPKALENIQQAIDMGEKACEMLKKIGLEILKNLEVDYLEFCNHKLEPLKIIEPTNTLILVAARAGKTRLLDNLWV</sequence>
<protein>
    <recommendedName>
        <fullName evidence="1">Pantothenate synthetase</fullName>
        <shortName evidence="1">PS</shortName>
        <ecNumber evidence="1">6.3.2.1</ecNumber>
    </recommendedName>
    <alternativeName>
        <fullName evidence="1">Pantoate--beta-alanine ligase</fullName>
    </alternativeName>
    <alternativeName>
        <fullName evidence="1">Pantoate-activating enzyme</fullName>
    </alternativeName>
</protein>
<feature type="chain" id="PRO_0000305463" description="Pantothenate synthetase">
    <location>
        <begin position="1"/>
        <end position="276"/>
    </location>
</feature>
<feature type="active site" description="Proton donor" evidence="1">
    <location>
        <position position="34"/>
    </location>
</feature>
<feature type="binding site" evidence="1">
    <location>
        <begin position="27"/>
        <end position="34"/>
    </location>
    <ligand>
        <name>ATP</name>
        <dbReference type="ChEBI" id="CHEBI:30616"/>
    </ligand>
</feature>
<feature type="binding site" evidence="1">
    <location>
        <position position="58"/>
    </location>
    <ligand>
        <name>(R)-pantoate</name>
        <dbReference type="ChEBI" id="CHEBI:15980"/>
    </ligand>
</feature>
<feature type="binding site" evidence="1">
    <location>
        <position position="58"/>
    </location>
    <ligand>
        <name>beta-alanine</name>
        <dbReference type="ChEBI" id="CHEBI:57966"/>
    </ligand>
</feature>
<feature type="binding site" evidence="1">
    <location>
        <begin position="147"/>
        <end position="150"/>
    </location>
    <ligand>
        <name>ATP</name>
        <dbReference type="ChEBI" id="CHEBI:30616"/>
    </ligand>
</feature>
<feature type="binding site" evidence="1">
    <location>
        <position position="153"/>
    </location>
    <ligand>
        <name>(R)-pantoate</name>
        <dbReference type="ChEBI" id="CHEBI:15980"/>
    </ligand>
</feature>
<feature type="binding site" evidence="1">
    <location>
        <position position="176"/>
    </location>
    <ligand>
        <name>ATP</name>
        <dbReference type="ChEBI" id="CHEBI:30616"/>
    </ligand>
</feature>
<feature type="binding site" evidence="1">
    <location>
        <begin position="184"/>
        <end position="187"/>
    </location>
    <ligand>
        <name>ATP</name>
        <dbReference type="ChEBI" id="CHEBI:30616"/>
    </ligand>
</feature>
<evidence type="ECO:0000255" key="1">
    <source>
        <dbReference type="HAMAP-Rule" id="MF_00158"/>
    </source>
</evidence>
<accession>Q17Z21</accession>
<comment type="function">
    <text evidence="1">Catalyzes the condensation of pantoate with beta-alanine in an ATP-dependent reaction via a pantoyl-adenylate intermediate.</text>
</comment>
<comment type="catalytic activity">
    <reaction evidence="1">
        <text>(R)-pantoate + beta-alanine + ATP = (R)-pantothenate + AMP + diphosphate + H(+)</text>
        <dbReference type="Rhea" id="RHEA:10912"/>
        <dbReference type="ChEBI" id="CHEBI:15378"/>
        <dbReference type="ChEBI" id="CHEBI:15980"/>
        <dbReference type="ChEBI" id="CHEBI:29032"/>
        <dbReference type="ChEBI" id="CHEBI:30616"/>
        <dbReference type="ChEBI" id="CHEBI:33019"/>
        <dbReference type="ChEBI" id="CHEBI:57966"/>
        <dbReference type="ChEBI" id="CHEBI:456215"/>
        <dbReference type="EC" id="6.3.2.1"/>
    </reaction>
</comment>
<comment type="pathway">
    <text evidence="1">Cofactor biosynthesis; (R)-pantothenate biosynthesis; (R)-pantothenate from (R)-pantoate and beta-alanine: step 1/1.</text>
</comment>
<comment type="subunit">
    <text evidence="1">Homodimer.</text>
</comment>
<comment type="subcellular location">
    <subcellularLocation>
        <location evidence="1">Cytoplasm</location>
    </subcellularLocation>
</comment>
<comment type="miscellaneous">
    <text evidence="1">The reaction proceeds by a bi uni uni bi ping pong mechanism.</text>
</comment>
<comment type="similarity">
    <text evidence="1">Belongs to the pantothenate synthetase family.</text>
</comment>